<sequence>MTPSIGSDHANSASDEEILSGAASSSDESDYLDSGVSRKRRRTAEISQDKAGKVEPEDDDDDDDDDDDDEELKRVLSTIAAPSRIKRNVPGDKKEVQAKPVVAPKNTIQAPTDPNTTFSALDVRPWLVQSLENMAIKRPTGIQKGCIPEILKGRDCIGGSRTGSGKTMAFAVPILQKWSEDPTAIFAVVLTPTRELALQIFEQFKAISSPQSLKAILVTGGSDMRTQAIEIGKRPHVIIATPGRLADHIRTSGEDTICGLRRVRYVVLDEADRLLNATGPGSMLPDVEECLSVLPPATERQTLLFTATITPEVRALKDMPIKPGKQPVFVCEVDTQTLAIPATLKQMYIKVPVTHKEHYLHTFLLTEANVDKTVILFCNRTSTADYLHHLLRMLEHRVTSLHSKLPQRQRIDNLARFRASAARILVATDVAARGLDIPEVSLVINYDLPRDPDDYIHRVGRTARAGRKGEAVSFVGQRDVELALTIEKRVGRDMEAWEEEGVNLETRVVRDALKLVSEKKREALLEVEEGREVGGKRKRTKQKLRVD</sequence>
<accession>Q4I662</accession>
<accession>A0A098DTA2</accession>
<accession>A0A0E0SF83</accession>
<accession>V6RH00</accession>
<keyword id="KW-0067">ATP-binding</keyword>
<keyword id="KW-0347">Helicase</keyword>
<keyword id="KW-0378">Hydrolase</keyword>
<keyword id="KW-0547">Nucleotide-binding</keyword>
<keyword id="KW-0539">Nucleus</keyword>
<keyword id="KW-1185">Reference proteome</keyword>
<keyword id="KW-0690">Ribosome biogenesis</keyword>
<keyword id="KW-0694">RNA-binding</keyword>
<keyword id="KW-0698">rRNA processing</keyword>
<comment type="function">
    <text evidence="1">ATP-binding RNA helicase involved in 40S ribosomal subunit biogenesis and is required for the normal formation of 18S rRNAs through pre-rRNA processing at A0, A1 and A2 sites. Required for vegetative growth (By similarity).</text>
</comment>
<comment type="catalytic activity">
    <reaction>
        <text>ATP + H2O = ADP + phosphate + H(+)</text>
        <dbReference type="Rhea" id="RHEA:13065"/>
        <dbReference type="ChEBI" id="CHEBI:15377"/>
        <dbReference type="ChEBI" id="CHEBI:15378"/>
        <dbReference type="ChEBI" id="CHEBI:30616"/>
        <dbReference type="ChEBI" id="CHEBI:43474"/>
        <dbReference type="ChEBI" id="CHEBI:456216"/>
        <dbReference type="EC" id="3.6.4.13"/>
    </reaction>
</comment>
<comment type="subcellular location">
    <subcellularLocation>
        <location evidence="1">Nucleus</location>
        <location evidence="1">Nucleolus</location>
    </subcellularLocation>
</comment>
<comment type="domain">
    <text>The Q motif is unique to and characteristic of the DEAD box family of RNA helicases and controls ATP binding and hydrolysis.</text>
</comment>
<comment type="similarity">
    <text evidence="5">Belongs to the DEAD box helicase family. DDX49/DBP8 subfamily.</text>
</comment>
<reference key="1">
    <citation type="journal article" date="2007" name="Science">
        <title>The Fusarium graminearum genome reveals a link between localized polymorphism and pathogen specialization.</title>
        <authorList>
            <person name="Cuomo C.A."/>
            <person name="Gueldener U."/>
            <person name="Xu J.-R."/>
            <person name="Trail F."/>
            <person name="Turgeon B.G."/>
            <person name="Di Pietro A."/>
            <person name="Walton J.D."/>
            <person name="Ma L.-J."/>
            <person name="Baker S.E."/>
            <person name="Rep M."/>
            <person name="Adam G."/>
            <person name="Antoniw J."/>
            <person name="Baldwin T."/>
            <person name="Calvo S.E."/>
            <person name="Chang Y.-L."/>
            <person name="DeCaprio D."/>
            <person name="Gale L.R."/>
            <person name="Gnerre S."/>
            <person name="Goswami R.S."/>
            <person name="Hammond-Kosack K."/>
            <person name="Harris L.J."/>
            <person name="Hilburn K."/>
            <person name="Kennell J.C."/>
            <person name="Kroken S."/>
            <person name="Magnuson J.K."/>
            <person name="Mannhaupt G."/>
            <person name="Mauceli E.W."/>
            <person name="Mewes H.-W."/>
            <person name="Mitterbauer R."/>
            <person name="Muehlbauer G."/>
            <person name="Muensterkoetter M."/>
            <person name="Nelson D."/>
            <person name="O'Donnell K."/>
            <person name="Ouellet T."/>
            <person name="Qi W."/>
            <person name="Quesneville H."/>
            <person name="Roncero M.I.G."/>
            <person name="Seong K.-Y."/>
            <person name="Tetko I.V."/>
            <person name="Urban M."/>
            <person name="Waalwijk C."/>
            <person name="Ward T.J."/>
            <person name="Yao J."/>
            <person name="Birren B.W."/>
            <person name="Kistler H.C."/>
        </authorList>
    </citation>
    <scope>NUCLEOTIDE SEQUENCE [LARGE SCALE GENOMIC DNA]</scope>
    <source>
        <strain>ATCC MYA-4620 / CBS 123657 / FGSC 9075 / NRRL 31084 / PH-1</strain>
    </source>
</reference>
<reference key="2">
    <citation type="journal article" date="2010" name="Nature">
        <title>Comparative genomics reveals mobile pathogenicity chromosomes in Fusarium.</title>
        <authorList>
            <person name="Ma L.-J."/>
            <person name="van der Does H.C."/>
            <person name="Borkovich K.A."/>
            <person name="Coleman J.J."/>
            <person name="Daboussi M.-J."/>
            <person name="Di Pietro A."/>
            <person name="Dufresne M."/>
            <person name="Freitag M."/>
            <person name="Grabherr M."/>
            <person name="Henrissat B."/>
            <person name="Houterman P.M."/>
            <person name="Kang S."/>
            <person name="Shim W.-B."/>
            <person name="Woloshuk C."/>
            <person name="Xie X."/>
            <person name="Xu J.-R."/>
            <person name="Antoniw J."/>
            <person name="Baker S.E."/>
            <person name="Bluhm B.H."/>
            <person name="Breakspear A."/>
            <person name="Brown D.W."/>
            <person name="Butchko R.A.E."/>
            <person name="Chapman S."/>
            <person name="Coulson R."/>
            <person name="Coutinho P.M."/>
            <person name="Danchin E.G.J."/>
            <person name="Diener A."/>
            <person name="Gale L.R."/>
            <person name="Gardiner D.M."/>
            <person name="Goff S."/>
            <person name="Hammond-Kosack K.E."/>
            <person name="Hilburn K."/>
            <person name="Hua-Van A."/>
            <person name="Jonkers W."/>
            <person name="Kazan K."/>
            <person name="Kodira C.D."/>
            <person name="Koehrsen M."/>
            <person name="Kumar L."/>
            <person name="Lee Y.-H."/>
            <person name="Li L."/>
            <person name="Manners J.M."/>
            <person name="Miranda-Saavedra D."/>
            <person name="Mukherjee M."/>
            <person name="Park G."/>
            <person name="Park J."/>
            <person name="Park S.-Y."/>
            <person name="Proctor R.H."/>
            <person name="Regev A."/>
            <person name="Ruiz-Roldan M.C."/>
            <person name="Sain D."/>
            <person name="Sakthikumar S."/>
            <person name="Sykes S."/>
            <person name="Schwartz D.C."/>
            <person name="Turgeon B.G."/>
            <person name="Wapinski I."/>
            <person name="Yoder O."/>
            <person name="Young S."/>
            <person name="Zeng Q."/>
            <person name="Zhou S."/>
            <person name="Galagan J."/>
            <person name="Cuomo C.A."/>
            <person name="Kistler H.C."/>
            <person name="Rep M."/>
        </authorList>
    </citation>
    <scope>GENOME REANNOTATION</scope>
    <source>
        <strain>ATCC MYA-4620 / CBS 123657 / FGSC 9075 / NRRL 31084 / PH-1</strain>
    </source>
</reference>
<reference key="3">
    <citation type="journal article" date="2015" name="BMC Genomics">
        <title>The completed genome sequence of the pathogenic ascomycete fungus Fusarium graminearum.</title>
        <authorList>
            <person name="King R."/>
            <person name="Urban M."/>
            <person name="Hammond-Kosack M.C.U."/>
            <person name="Hassani-Pak K."/>
            <person name="Hammond-Kosack K.E."/>
        </authorList>
    </citation>
    <scope>NUCLEOTIDE SEQUENCE [LARGE SCALE GENOMIC DNA]</scope>
    <source>
        <strain>ATCC MYA-4620 / CBS 123657 / FGSC 9075 / NRRL 31084 / PH-1</strain>
    </source>
</reference>
<protein>
    <recommendedName>
        <fullName>ATP-dependent RNA helicase DBP8</fullName>
        <ecNumber>3.6.4.13</ecNumber>
    </recommendedName>
</protein>
<name>DBP8_GIBZE</name>
<dbReference type="EC" id="3.6.4.13"/>
<dbReference type="EMBL" id="DS231666">
    <property type="protein sequence ID" value="ESU13534.1"/>
    <property type="molecule type" value="Genomic_DNA"/>
</dbReference>
<dbReference type="EMBL" id="HG970335">
    <property type="protein sequence ID" value="CEF85096.1"/>
    <property type="molecule type" value="Genomic_DNA"/>
</dbReference>
<dbReference type="RefSeq" id="XP_011327041.1">
    <property type="nucleotide sequence ID" value="XM_011328739.1"/>
</dbReference>
<dbReference type="SMR" id="Q4I662"/>
<dbReference type="FunCoup" id="Q4I662">
    <property type="interactions" value="826"/>
</dbReference>
<dbReference type="STRING" id="229533.Q4I662"/>
<dbReference type="GeneID" id="23554381"/>
<dbReference type="KEGG" id="fgr:FGSG_07296"/>
<dbReference type="VEuPathDB" id="FungiDB:FGRAMPH1_01G24455"/>
<dbReference type="eggNOG" id="KOG0340">
    <property type="taxonomic scope" value="Eukaryota"/>
</dbReference>
<dbReference type="HOGENOM" id="CLU_003041_1_1_1"/>
<dbReference type="InParanoid" id="Q4I662"/>
<dbReference type="OrthoDB" id="96653at110618"/>
<dbReference type="Proteomes" id="UP000070720">
    <property type="component" value="Chromosome 4"/>
</dbReference>
<dbReference type="GO" id="GO:0005829">
    <property type="term" value="C:cytosol"/>
    <property type="evidence" value="ECO:0007669"/>
    <property type="project" value="TreeGrafter"/>
</dbReference>
<dbReference type="GO" id="GO:0005730">
    <property type="term" value="C:nucleolus"/>
    <property type="evidence" value="ECO:0007669"/>
    <property type="project" value="UniProtKB-SubCell"/>
</dbReference>
<dbReference type="GO" id="GO:0005524">
    <property type="term" value="F:ATP binding"/>
    <property type="evidence" value="ECO:0007669"/>
    <property type="project" value="UniProtKB-KW"/>
</dbReference>
<dbReference type="GO" id="GO:0016887">
    <property type="term" value="F:ATP hydrolysis activity"/>
    <property type="evidence" value="ECO:0007669"/>
    <property type="project" value="RHEA"/>
</dbReference>
<dbReference type="GO" id="GO:0003723">
    <property type="term" value="F:RNA binding"/>
    <property type="evidence" value="ECO:0007669"/>
    <property type="project" value="UniProtKB-KW"/>
</dbReference>
<dbReference type="GO" id="GO:0003724">
    <property type="term" value="F:RNA helicase activity"/>
    <property type="evidence" value="ECO:0007669"/>
    <property type="project" value="UniProtKB-EC"/>
</dbReference>
<dbReference type="GO" id="GO:0006364">
    <property type="term" value="P:rRNA processing"/>
    <property type="evidence" value="ECO:0007669"/>
    <property type="project" value="UniProtKB-KW"/>
</dbReference>
<dbReference type="CDD" id="cd17955">
    <property type="entry name" value="DEADc_DDX49"/>
    <property type="match status" value="1"/>
</dbReference>
<dbReference type="CDD" id="cd18787">
    <property type="entry name" value="SF2_C_DEAD"/>
    <property type="match status" value="1"/>
</dbReference>
<dbReference type="Gene3D" id="3.40.50.300">
    <property type="entry name" value="P-loop containing nucleotide triphosphate hydrolases"/>
    <property type="match status" value="2"/>
</dbReference>
<dbReference type="InterPro" id="IPR011545">
    <property type="entry name" value="DEAD/DEAH_box_helicase_dom"/>
</dbReference>
<dbReference type="InterPro" id="IPR050079">
    <property type="entry name" value="DEAD_box_RNA_helicase"/>
</dbReference>
<dbReference type="InterPro" id="IPR014001">
    <property type="entry name" value="Helicase_ATP-bd"/>
</dbReference>
<dbReference type="InterPro" id="IPR001650">
    <property type="entry name" value="Helicase_C-like"/>
</dbReference>
<dbReference type="InterPro" id="IPR027417">
    <property type="entry name" value="P-loop_NTPase"/>
</dbReference>
<dbReference type="InterPro" id="IPR000629">
    <property type="entry name" value="RNA-helicase_DEAD-box_CS"/>
</dbReference>
<dbReference type="InterPro" id="IPR014014">
    <property type="entry name" value="RNA_helicase_DEAD_Q_motif"/>
</dbReference>
<dbReference type="PANTHER" id="PTHR47959:SF24">
    <property type="entry name" value="ATP-DEPENDENT RNA HELICASE"/>
    <property type="match status" value="1"/>
</dbReference>
<dbReference type="PANTHER" id="PTHR47959">
    <property type="entry name" value="ATP-DEPENDENT RNA HELICASE RHLE-RELATED"/>
    <property type="match status" value="1"/>
</dbReference>
<dbReference type="Pfam" id="PF00270">
    <property type="entry name" value="DEAD"/>
    <property type="match status" value="1"/>
</dbReference>
<dbReference type="Pfam" id="PF00271">
    <property type="entry name" value="Helicase_C"/>
    <property type="match status" value="1"/>
</dbReference>
<dbReference type="SMART" id="SM00487">
    <property type="entry name" value="DEXDc"/>
    <property type="match status" value="1"/>
</dbReference>
<dbReference type="SMART" id="SM00490">
    <property type="entry name" value="HELICc"/>
    <property type="match status" value="1"/>
</dbReference>
<dbReference type="SUPFAM" id="SSF52540">
    <property type="entry name" value="P-loop containing nucleoside triphosphate hydrolases"/>
    <property type="match status" value="1"/>
</dbReference>
<dbReference type="PROSITE" id="PS00039">
    <property type="entry name" value="DEAD_ATP_HELICASE"/>
    <property type="match status" value="1"/>
</dbReference>
<dbReference type="PROSITE" id="PS51192">
    <property type="entry name" value="HELICASE_ATP_BIND_1"/>
    <property type="match status" value="1"/>
</dbReference>
<dbReference type="PROSITE" id="PS51194">
    <property type="entry name" value="HELICASE_CTER"/>
    <property type="match status" value="1"/>
</dbReference>
<dbReference type="PROSITE" id="PS51195">
    <property type="entry name" value="Q_MOTIF"/>
    <property type="match status" value="1"/>
</dbReference>
<gene>
    <name type="primary">DBP8</name>
    <name type="ORF">FGRRES_07296</name>
    <name type="ORF">FGSG_07296</name>
</gene>
<feature type="chain" id="PRO_0000232288" description="ATP-dependent RNA helicase DBP8">
    <location>
        <begin position="1"/>
        <end position="547"/>
    </location>
</feature>
<feature type="domain" description="Helicase ATP-binding" evidence="2">
    <location>
        <begin position="147"/>
        <end position="327"/>
    </location>
</feature>
<feature type="domain" description="Helicase C-terminal" evidence="3">
    <location>
        <begin position="343"/>
        <end position="505"/>
    </location>
</feature>
<feature type="region of interest" description="Disordered" evidence="4">
    <location>
        <begin position="1"/>
        <end position="93"/>
    </location>
</feature>
<feature type="short sequence motif" description="Q motif">
    <location>
        <begin position="116"/>
        <end position="144"/>
    </location>
</feature>
<feature type="short sequence motif" description="DEAD box">
    <location>
        <begin position="269"/>
        <end position="272"/>
    </location>
</feature>
<feature type="compositionally biased region" description="Polar residues" evidence="4">
    <location>
        <begin position="1"/>
        <end position="13"/>
    </location>
</feature>
<feature type="compositionally biased region" description="Basic and acidic residues" evidence="4">
    <location>
        <begin position="43"/>
        <end position="55"/>
    </location>
</feature>
<feature type="compositionally biased region" description="Acidic residues" evidence="4">
    <location>
        <begin position="56"/>
        <end position="70"/>
    </location>
</feature>
<feature type="binding site" evidence="2">
    <location>
        <begin position="160"/>
        <end position="167"/>
    </location>
    <ligand>
        <name>ATP</name>
        <dbReference type="ChEBI" id="CHEBI:30616"/>
    </ligand>
</feature>
<proteinExistence type="inferred from homology"/>
<evidence type="ECO:0000250" key="1"/>
<evidence type="ECO:0000255" key="2">
    <source>
        <dbReference type="PROSITE-ProRule" id="PRU00541"/>
    </source>
</evidence>
<evidence type="ECO:0000255" key="3">
    <source>
        <dbReference type="PROSITE-ProRule" id="PRU00542"/>
    </source>
</evidence>
<evidence type="ECO:0000256" key="4">
    <source>
        <dbReference type="SAM" id="MobiDB-lite"/>
    </source>
</evidence>
<evidence type="ECO:0000305" key="5"/>
<organism>
    <name type="scientific">Gibberella zeae (strain ATCC MYA-4620 / CBS 123657 / FGSC 9075 / NRRL 31084 / PH-1)</name>
    <name type="common">Wheat head blight fungus</name>
    <name type="synonym">Fusarium graminearum</name>
    <dbReference type="NCBI Taxonomy" id="229533"/>
    <lineage>
        <taxon>Eukaryota</taxon>
        <taxon>Fungi</taxon>
        <taxon>Dikarya</taxon>
        <taxon>Ascomycota</taxon>
        <taxon>Pezizomycotina</taxon>
        <taxon>Sordariomycetes</taxon>
        <taxon>Hypocreomycetidae</taxon>
        <taxon>Hypocreales</taxon>
        <taxon>Nectriaceae</taxon>
        <taxon>Fusarium</taxon>
    </lineage>
</organism>